<reference key="1">
    <citation type="journal article" date="2009" name="PLoS Genet.">
        <title>Organised genome dynamics in the Escherichia coli species results in highly diverse adaptive paths.</title>
        <authorList>
            <person name="Touchon M."/>
            <person name="Hoede C."/>
            <person name="Tenaillon O."/>
            <person name="Barbe V."/>
            <person name="Baeriswyl S."/>
            <person name="Bidet P."/>
            <person name="Bingen E."/>
            <person name="Bonacorsi S."/>
            <person name="Bouchier C."/>
            <person name="Bouvet O."/>
            <person name="Calteau A."/>
            <person name="Chiapello H."/>
            <person name="Clermont O."/>
            <person name="Cruveiller S."/>
            <person name="Danchin A."/>
            <person name="Diard M."/>
            <person name="Dossat C."/>
            <person name="Karoui M.E."/>
            <person name="Frapy E."/>
            <person name="Garry L."/>
            <person name="Ghigo J.M."/>
            <person name="Gilles A.M."/>
            <person name="Johnson J."/>
            <person name="Le Bouguenec C."/>
            <person name="Lescat M."/>
            <person name="Mangenot S."/>
            <person name="Martinez-Jehanne V."/>
            <person name="Matic I."/>
            <person name="Nassif X."/>
            <person name="Oztas S."/>
            <person name="Petit M.A."/>
            <person name="Pichon C."/>
            <person name="Rouy Z."/>
            <person name="Ruf C.S."/>
            <person name="Schneider D."/>
            <person name="Tourret J."/>
            <person name="Vacherie B."/>
            <person name="Vallenet D."/>
            <person name="Medigue C."/>
            <person name="Rocha E.P.C."/>
            <person name="Denamur E."/>
        </authorList>
    </citation>
    <scope>NUCLEOTIDE SEQUENCE [LARGE SCALE GENOMIC DNA]</scope>
    <source>
        <strain>55989 / EAEC</strain>
    </source>
</reference>
<accession>B7LE91</accession>
<comment type="function">
    <text evidence="1">Probably involved in ribonucleotide reductase function.</text>
</comment>
<comment type="similarity">
    <text evidence="1">Belongs to the NrdI family.</text>
</comment>
<proteinExistence type="inferred from homology"/>
<gene>
    <name evidence="1" type="primary">nrdI</name>
    <name type="ordered locus">EC55989_2942</name>
</gene>
<protein>
    <recommendedName>
        <fullName evidence="1">Protein NrdI</fullName>
    </recommendedName>
</protein>
<feature type="chain" id="PRO_1000191755" description="Protein NrdI">
    <location>
        <begin position="1"/>
        <end position="136"/>
    </location>
</feature>
<name>NRDI_ECO55</name>
<evidence type="ECO:0000255" key="1">
    <source>
        <dbReference type="HAMAP-Rule" id="MF_00128"/>
    </source>
</evidence>
<dbReference type="EMBL" id="CU928145">
    <property type="protein sequence ID" value="CAU98818.1"/>
    <property type="molecule type" value="Genomic_DNA"/>
</dbReference>
<dbReference type="RefSeq" id="WP_000080944.1">
    <property type="nucleotide sequence ID" value="NC_011748.1"/>
</dbReference>
<dbReference type="SMR" id="B7LE91"/>
<dbReference type="GeneID" id="75205917"/>
<dbReference type="KEGG" id="eck:EC55989_2942"/>
<dbReference type="HOGENOM" id="CLU_114845_0_0_6"/>
<dbReference type="Proteomes" id="UP000000746">
    <property type="component" value="Chromosome"/>
</dbReference>
<dbReference type="GO" id="GO:0010181">
    <property type="term" value="F:FMN binding"/>
    <property type="evidence" value="ECO:0007669"/>
    <property type="project" value="InterPro"/>
</dbReference>
<dbReference type="GO" id="GO:0036211">
    <property type="term" value="P:protein modification process"/>
    <property type="evidence" value="ECO:0007669"/>
    <property type="project" value="InterPro"/>
</dbReference>
<dbReference type="FunFam" id="3.40.50.360:FF:000005">
    <property type="entry name" value="Protein NrdI"/>
    <property type="match status" value="1"/>
</dbReference>
<dbReference type="Gene3D" id="3.40.50.360">
    <property type="match status" value="1"/>
</dbReference>
<dbReference type="HAMAP" id="MF_00128">
    <property type="entry name" value="NrdI"/>
    <property type="match status" value="1"/>
</dbReference>
<dbReference type="InterPro" id="IPR029039">
    <property type="entry name" value="Flavoprotein-like_sf"/>
</dbReference>
<dbReference type="InterPro" id="IPR020852">
    <property type="entry name" value="RNR_Ib_NrdI_bac"/>
</dbReference>
<dbReference type="InterPro" id="IPR004465">
    <property type="entry name" value="RNR_NrdI"/>
</dbReference>
<dbReference type="NCBIfam" id="TIGR00333">
    <property type="entry name" value="nrdI"/>
    <property type="match status" value="1"/>
</dbReference>
<dbReference type="PANTHER" id="PTHR37297">
    <property type="entry name" value="PROTEIN NRDI"/>
    <property type="match status" value="1"/>
</dbReference>
<dbReference type="PANTHER" id="PTHR37297:SF1">
    <property type="entry name" value="PROTEIN NRDI"/>
    <property type="match status" value="1"/>
</dbReference>
<dbReference type="Pfam" id="PF07972">
    <property type="entry name" value="Flavodoxin_NdrI"/>
    <property type="match status" value="1"/>
</dbReference>
<dbReference type="PIRSF" id="PIRSF005087">
    <property type="entry name" value="NrdI"/>
    <property type="match status" value="1"/>
</dbReference>
<dbReference type="SUPFAM" id="SSF52218">
    <property type="entry name" value="Flavoproteins"/>
    <property type="match status" value="1"/>
</dbReference>
<sequence length="136" mass="15312">MSQLVYFSSSSENTQRFIERLGLPAVRIPLNERERIQVDEPYILIVPSYGGGGTAGAVPRQVIRFLNDEHNRALLRGVIASGNRNFGEAYGRAGDVIAQKCGVPWLYRFELMGTQSDIENVRKGVTEFWQRQPQNA</sequence>
<organism>
    <name type="scientific">Escherichia coli (strain 55989 / EAEC)</name>
    <dbReference type="NCBI Taxonomy" id="585055"/>
    <lineage>
        <taxon>Bacteria</taxon>
        <taxon>Pseudomonadati</taxon>
        <taxon>Pseudomonadota</taxon>
        <taxon>Gammaproteobacteria</taxon>
        <taxon>Enterobacterales</taxon>
        <taxon>Enterobacteriaceae</taxon>
        <taxon>Escherichia</taxon>
    </lineage>
</organism>
<keyword id="KW-1185">Reference proteome</keyword>